<reference evidence="2" key="1">
    <citation type="journal article" date="2001" name="Biochim. Biophys. Acta">
        <title>Antimicrobial peptides isolated from skin secretions of the diploid frog, Xenopus tropicalis (Pipidae).</title>
        <authorList>
            <person name="Ali M.F."/>
            <person name="Soto A."/>
            <person name="Knoop F.C."/>
            <person name="Conlon J.M."/>
        </authorList>
    </citation>
    <scope>PROTEIN SEQUENCE</scope>
    <scope>FUNCTION</scope>
    <scope>SUBCELLULAR LOCATION</scope>
    <scope>TISSUE SPECIFICITY</scope>
    <scope>MASS SPECTROMETRY</scope>
    <source>
        <tissue evidence="1">Skin secretion</tissue>
    </source>
</reference>
<keyword id="KW-0878">Amphibian defense peptide</keyword>
<keyword id="KW-0044">Antibiotic</keyword>
<keyword id="KW-0929">Antimicrobial</keyword>
<keyword id="KW-0204">Cytolysis</keyword>
<keyword id="KW-0903">Direct protein sequencing</keyword>
<keyword id="KW-0295">Fungicide</keyword>
<keyword id="KW-0354">Hemolysis</keyword>
<keyword id="KW-1185">Reference proteome</keyword>
<keyword id="KW-0964">Secreted</keyword>
<organism>
    <name type="scientific">Xenopus tropicalis</name>
    <name type="common">Western clawed frog</name>
    <name type="synonym">Silurana tropicalis</name>
    <dbReference type="NCBI Taxonomy" id="8364"/>
    <lineage>
        <taxon>Eukaryota</taxon>
        <taxon>Metazoa</taxon>
        <taxon>Chordata</taxon>
        <taxon>Craniata</taxon>
        <taxon>Vertebrata</taxon>
        <taxon>Euteleostomi</taxon>
        <taxon>Amphibia</taxon>
        <taxon>Batrachia</taxon>
        <taxon>Anura</taxon>
        <taxon>Pipoidea</taxon>
        <taxon>Pipidae</taxon>
        <taxon>Xenopodinae</taxon>
        <taxon>Xenopus</taxon>
        <taxon>Silurana</taxon>
    </lineage>
</organism>
<protein>
    <recommendedName>
        <fullName>Antimicrobial peptide 4</fullName>
    </recommendedName>
    <alternativeName>
        <fullName>XT-4</fullName>
    </alternativeName>
</protein>
<comment type="function">
    <text evidence="1">Has very strong antimicrobial activity against Gram-positive bacterium S.aureus and yeast C.albicans, and very weak activity against Gram-negative bacterium E.coli. Has strong hemolytic activity against human red blood cells.</text>
</comment>
<comment type="subcellular location">
    <subcellularLocation>
        <location evidence="1">Secreted</location>
    </subcellularLocation>
</comment>
<comment type="tissue specificity">
    <text evidence="1">Expressed by the skin glands.</text>
</comment>
<comment type="mass spectrometry"/>
<feature type="peptide" id="PRO_0000043867" description="Antimicrobial peptide 4">
    <location>
        <begin position="1"/>
        <end position="22"/>
    </location>
</feature>
<name>XT4_XENTR</name>
<sequence>GVFLDALKKFAKGGMNAVLNPK</sequence>
<evidence type="ECO:0000269" key="1">
    <source>
    </source>
</evidence>
<evidence type="ECO:0000305" key="2"/>
<proteinExistence type="evidence at protein level"/>
<accession>P84384</accession>
<dbReference type="InParanoid" id="P84384"/>
<dbReference type="Proteomes" id="UP000008143">
    <property type="component" value="Unplaced"/>
</dbReference>
<dbReference type="GO" id="GO:0005576">
    <property type="term" value="C:extracellular region"/>
    <property type="evidence" value="ECO:0000314"/>
    <property type="project" value="UniProtKB"/>
</dbReference>
<dbReference type="GO" id="GO:0050832">
    <property type="term" value="P:defense response to fungus"/>
    <property type="evidence" value="ECO:0000314"/>
    <property type="project" value="UniProtKB"/>
</dbReference>
<dbReference type="GO" id="GO:0050829">
    <property type="term" value="P:defense response to Gram-negative bacterium"/>
    <property type="evidence" value="ECO:0000314"/>
    <property type="project" value="UniProtKB"/>
</dbReference>
<dbReference type="GO" id="GO:0050830">
    <property type="term" value="P:defense response to Gram-positive bacterium"/>
    <property type="evidence" value="ECO:0000314"/>
    <property type="project" value="UniProtKB"/>
</dbReference>
<dbReference type="GO" id="GO:0044179">
    <property type="term" value="P:hemolysis in another organism"/>
    <property type="evidence" value="ECO:0000314"/>
    <property type="project" value="UniProtKB"/>
</dbReference>